<comment type="similarity">
    <text evidence="1">Belongs to the UPF0242 family.</text>
</comment>
<organism>
    <name type="scientific">Chlamydia pneumoniae</name>
    <name type="common">Chlamydophila pneumoniae</name>
    <dbReference type="NCBI Taxonomy" id="83558"/>
    <lineage>
        <taxon>Bacteria</taxon>
        <taxon>Pseudomonadati</taxon>
        <taxon>Chlamydiota</taxon>
        <taxon>Chlamydiia</taxon>
        <taxon>Chlamydiales</taxon>
        <taxon>Chlamydiaceae</taxon>
        <taxon>Chlamydia/Chlamydophila group</taxon>
        <taxon>Chlamydia</taxon>
    </lineage>
</organism>
<reference key="1">
    <citation type="journal article" date="1999" name="Nat. Genet.">
        <title>Comparative genomes of Chlamydia pneumoniae and C. trachomatis.</title>
        <authorList>
            <person name="Kalman S."/>
            <person name="Mitchell W.P."/>
            <person name="Marathe R."/>
            <person name="Lammel C.J."/>
            <person name="Fan J."/>
            <person name="Hyman R.W."/>
            <person name="Olinger L."/>
            <person name="Grimwood J."/>
            <person name="Davis R.W."/>
            <person name="Stephens R.S."/>
        </authorList>
    </citation>
    <scope>NUCLEOTIDE SEQUENCE [LARGE SCALE GENOMIC DNA]</scope>
    <source>
        <strain>CWL029</strain>
    </source>
</reference>
<reference key="2">
    <citation type="journal article" date="2000" name="Nucleic Acids Res.">
        <title>Genome sequences of Chlamydia trachomatis MoPn and Chlamydia pneumoniae AR39.</title>
        <authorList>
            <person name="Read T.D."/>
            <person name="Brunham R.C."/>
            <person name="Shen C."/>
            <person name="Gill S.R."/>
            <person name="Heidelberg J.F."/>
            <person name="White O."/>
            <person name="Hickey E.K."/>
            <person name="Peterson J.D."/>
            <person name="Utterback T.R."/>
            <person name="Berry K.J."/>
            <person name="Bass S."/>
            <person name="Linher K.D."/>
            <person name="Weidman J.F."/>
            <person name="Khouri H.M."/>
            <person name="Craven B."/>
            <person name="Bowman C."/>
            <person name="Dodson R.J."/>
            <person name="Gwinn M.L."/>
            <person name="Nelson W.C."/>
            <person name="DeBoy R.T."/>
            <person name="Kolonay J.F."/>
            <person name="McClarty G."/>
            <person name="Salzberg S.L."/>
            <person name="Eisen J.A."/>
            <person name="Fraser C.M."/>
        </authorList>
    </citation>
    <scope>NUCLEOTIDE SEQUENCE [LARGE SCALE GENOMIC DNA]</scope>
    <source>
        <strain>AR39</strain>
    </source>
</reference>
<reference key="3">
    <citation type="journal article" date="2000" name="Nucleic Acids Res.">
        <title>Comparison of whole genome sequences of Chlamydia pneumoniae J138 from Japan and CWL029 from USA.</title>
        <authorList>
            <person name="Shirai M."/>
            <person name="Hirakawa H."/>
            <person name="Kimoto M."/>
            <person name="Tabuchi M."/>
            <person name="Kishi F."/>
            <person name="Ouchi K."/>
            <person name="Shiba T."/>
            <person name="Ishii K."/>
            <person name="Hattori M."/>
            <person name="Kuhara S."/>
            <person name="Nakazawa T."/>
        </authorList>
    </citation>
    <scope>NUCLEOTIDE SEQUENCE [LARGE SCALE GENOMIC DNA]</scope>
    <source>
        <strain>J138</strain>
    </source>
</reference>
<reference key="4">
    <citation type="submission" date="2002-05" db="EMBL/GenBank/DDBJ databases">
        <title>The genome sequence of Chlamydia pneumoniae TW183 and comparison with other Chlamydia strains based on whole genome sequence analysis.</title>
        <authorList>
            <person name="Geng M.M."/>
            <person name="Schuhmacher A."/>
            <person name="Muehldorfer I."/>
            <person name="Bensch K.W."/>
            <person name="Schaefer K.P."/>
            <person name="Schneider S."/>
            <person name="Pohl T."/>
            <person name="Essig A."/>
            <person name="Marre R."/>
            <person name="Melchers K."/>
        </authorList>
    </citation>
    <scope>NUCLEOTIDE SEQUENCE [LARGE SCALE GENOMIC DNA]</scope>
    <source>
        <strain>TW-183</strain>
    </source>
</reference>
<evidence type="ECO:0000305" key="1"/>
<name>Y755_CHLPN</name>
<dbReference type="EMBL" id="AE001363">
    <property type="protein sequence ID" value="AAD18893.1"/>
    <property type="molecule type" value="Genomic_DNA"/>
</dbReference>
<dbReference type="EMBL" id="AE002161">
    <property type="protein sequence ID" value="AAF38884.1"/>
    <property type="molecule type" value="Genomic_DNA"/>
</dbReference>
<dbReference type="EMBL" id="BA000008">
    <property type="protein sequence ID" value="BAA98963.1"/>
    <property type="molecule type" value="Genomic_DNA"/>
</dbReference>
<dbReference type="EMBL" id="AE009440">
    <property type="protein sequence ID" value="AAP98712.1"/>
    <property type="molecule type" value="Genomic_DNA"/>
</dbReference>
<dbReference type="PIR" id="A86585">
    <property type="entry name" value="A86585"/>
</dbReference>
<dbReference type="PIR" id="D72039">
    <property type="entry name" value="D72039"/>
</dbReference>
<dbReference type="RefSeq" id="NP_224950.1">
    <property type="nucleotide sequence ID" value="NC_000922.1"/>
</dbReference>
<dbReference type="RefSeq" id="WP_010883392.1">
    <property type="nucleotide sequence ID" value="NZ_LN847257.1"/>
</dbReference>
<dbReference type="SMR" id="Q9Z7F1"/>
<dbReference type="STRING" id="406984.CPK_ORF00161"/>
<dbReference type="GeneID" id="45050810"/>
<dbReference type="KEGG" id="cpa:CP_1117"/>
<dbReference type="KEGG" id="cpj:CPj0755"/>
<dbReference type="KEGG" id="cpn:CPn_0755"/>
<dbReference type="KEGG" id="cpt:CpB0783"/>
<dbReference type="PATRIC" id="fig|115713.3.peg.832"/>
<dbReference type="eggNOG" id="COG4372">
    <property type="taxonomic scope" value="Bacteria"/>
</dbReference>
<dbReference type="HOGENOM" id="CLU_058964_0_0_0"/>
<dbReference type="OMA" id="QWETDLR"/>
<dbReference type="OrthoDB" id="18689at2"/>
<dbReference type="Proteomes" id="UP000000583">
    <property type="component" value="Chromosome"/>
</dbReference>
<dbReference type="Proteomes" id="UP000000801">
    <property type="component" value="Chromosome"/>
</dbReference>
<dbReference type="InterPro" id="IPR009623">
    <property type="entry name" value="UPF0242_N"/>
</dbReference>
<dbReference type="InterPro" id="IPR040578">
    <property type="entry name" value="UPF0242_PAS"/>
</dbReference>
<dbReference type="Pfam" id="PF18095">
    <property type="entry name" value="PAS_12"/>
    <property type="match status" value="1"/>
</dbReference>
<dbReference type="Pfam" id="PF06785">
    <property type="entry name" value="UPF0242"/>
    <property type="match status" value="1"/>
</dbReference>
<proteinExistence type="inferred from homology"/>
<protein>
    <recommendedName>
        <fullName>UPF0242 protein CPn_0755/CP_1117/CPj0755/CpB0783</fullName>
    </recommendedName>
</protein>
<gene>
    <name type="ordered locus">CPn_0755</name>
    <name type="ordered locus">CP_1117</name>
    <name type="ordered locus">CPj0755</name>
    <name type="ordered locus">CpB0783</name>
</gene>
<feature type="chain" id="PRO_0000216822" description="UPF0242 protein CPn_0755/CP_1117/CPj0755/CpB0783">
    <location>
        <begin position="1"/>
        <end position="401"/>
    </location>
</feature>
<accession>Q9Z7F1</accession>
<sequence length="401" mass="46487">MLLVRKWLHTCFKYWIYFLPVVTLLLPLVCYPFLSISQKIYGYFVFTTISSLGWFFALRRRENQLKTAAVQLLQTKIRKLTENNEGLRQIRESLKEHQQESAQLQIQSQKLKNSLFHLQGLLVKTKGEGQKLETLLLHRTEENRCLKMQVDSLIQECGEKTEEVQTLNRELAETLAYQQALNDEYQATFSEQRNMLDKRQIYIGKLENKVQDLMYEIRNLLQLESDIAENIPSQESNAVTGNISLQLSSELKKIAFKAENIEAASSLTASRYLHTDTSVHNYSLECRQLFDSLREENLGMLFVYARQSQRAVFANALFKTWTGYCAEDFLKFGSDIVISGGKQWMEDLHSSREECSGRLVIKTKSRGHLPFRYCLMALNKGPLCYHVLGVLYPLHKEVLQS</sequence>